<accession>Q672I5</accession>
<proteinExistence type="inferred from homology"/>
<geneLocation type="chloroplast"/>
<reference key="1">
    <citation type="submission" date="2004-07" db="EMBL/GenBank/DDBJ databases">
        <authorList>
            <person name="Nallar S.C."/>
            <person name="Nekkalapudi S.C."/>
            <person name="Podile A.R."/>
        </authorList>
    </citation>
    <scope>NUCLEOTIDE SEQUENCE [GENOMIC DNA]</scope>
</reference>
<protein>
    <recommendedName>
        <fullName evidence="1">Photosystem II reaction center protein M</fullName>
        <shortName evidence="1">PSII-M</shortName>
    </recommendedName>
</protein>
<keyword id="KW-0150">Chloroplast</keyword>
<keyword id="KW-0472">Membrane</keyword>
<keyword id="KW-0602">Photosynthesis</keyword>
<keyword id="KW-0604">Photosystem II</keyword>
<keyword id="KW-0934">Plastid</keyword>
<keyword id="KW-0674">Reaction center</keyword>
<keyword id="KW-0793">Thylakoid</keyword>
<keyword id="KW-0812">Transmembrane</keyword>
<keyword id="KW-1133">Transmembrane helix</keyword>
<dbReference type="EMBL" id="AY694133">
    <property type="protein sequence ID" value="AAU12167.1"/>
    <property type="molecule type" value="Genomic_DNA"/>
</dbReference>
<dbReference type="RefSeq" id="YP_009033958.1">
    <property type="nucleotide sequence ID" value="NC_024171.1"/>
</dbReference>
<dbReference type="SMR" id="Q672I5"/>
<dbReference type="ChEMBL" id="CHEMBL2366500"/>
<dbReference type="GeneID" id="19493412"/>
<dbReference type="GO" id="GO:0009535">
    <property type="term" value="C:chloroplast thylakoid membrane"/>
    <property type="evidence" value="ECO:0007669"/>
    <property type="project" value="UniProtKB-SubCell"/>
</dbReference>
<dbReference type="GO" id="GO:0009523">
    <property type="term" value="C:photosystem II"/>
    <property type="evidence" value="ECO:0007669"/>
    <property type="project" value="UniProtKB-KW"/>
</dbReference>
<dbReference type="GO" id="GO:0019684">
    <property type="term" value="P:photosynthesis, light reaction"/>
    <property type="evidence" value="ECO:0007669"/>
    <property type="project" value="InterPro"/>
</dbReference>
<dbReference type="HAMAP" id="MF_00438">
    <property type="entry name" value="PSII_PsbM"/>
    <property type="match status" value="1"/>
</dbReference>
<dbReference type="InterPro" id="IPR007826">
    <property type="entry name" value="PSII_PsbM"/>
</dbReference>
<dbReference type="InterPro" id="IPR037269">
    <property type="entry name" value="PSII_PsbM_sf"/>
</dbReference>
<dbReference type="NCBIfam" id="TIGR03038">
    <property type="entry name" value="PS_II_psbM"/>
    <property type="match status" value="1"/>
</dbReference>
<dbReference type="PANTHER" id="PTHR35774">
    <property type="entry name" value="PHOTOSYSTEM II REACTION CENTER PROTEIN M"/>
    <property type="match status" value="1"/>
</dbReference>
<dbReference type="PANTHER" id="PTHR35774:SF1">
    <property type="entry name" value="PHOTOSYSTEM II REACTION CENTER PROTEIN M"/>
    <property type="match status" value="1"/>
</dbReference>
<dbReference type="Pfam" id="PF05151">
    <property type="entry name" value="PsbM"/>
    <property type="match status" value="1"/>
</dbReference>
<dbReference type="SUPFAM" id="SSF161033">
    <property type="entry name" value="Photosystem II reaction center protein M, PsbM"/>
    <property type="match status" value="1"/>
</dbReference>
<organism>
    <name type="scientific">Cenchrus americanus</name>
    <name type="common">Pearl millet</name>
    <name type="synonym">Pennisetum glaucum</name>
    <dbReference type="NCBI Taxonomy" id="4543"/>
    <lineage>
        <taxon>Eukaryota</taxon>
        <taxon>Viridiplantae</taxon>
        <taxon>Streptophyta</taxon>
        <taxon>Embryophyta</taxon>
        <taxon>Tracheophyta</taxon>
        <taxon>Spermatophyta</taxon>
        <taxon>Magnoliopsida</taxon>
        <taxon>Liliopsida</taxon>
        <taxon>Poales</taxon>
        <taxon>Poaceae</taxon>
        <taxon>PACMAD clade</taxon>
        <taxon>Panicoideae</taxon>
        <taxon>Panicodae</taxon>
        <taxon>Paniceae</taxon>
        <taxon>Cenchrinae</taxon>
        <taxon>Cenchrus</taxon>
    </lineage>
</organism>
<sequence>MEVNILAFIATALFILVPTAFLLIIYVKTASQND</sequence>
<gene>
    <name evidence="1" type="primary">psbM</name>
</gene>
<name>PSBM_CENAM</name>
<feature type="chain" id="PRO_0000217570" description="Photosystem II reaction center protein M">
    <location>
        <begin position="1"/>
        <end position="34"/>
    </location>
</feature>
<feature type="transmembrane region" description="Helical" evidence="1">
    <location>
        <begin position="5"/>
        <end position="25"/>
    </location>
</feature>
<evidence type="ECO:0000255" key="1">
    <source>
        <dbReference type="HAMAP-Rule" id="MF_00438"/>
    </source>
</evidence>
<comment type="function">
    <text evidence="1">One of the components of the core complex of photosystem II (PSII). PSII is a light-driven water:plastoquinone oxidoreductase that uses light energy to abstract electrons from H(2)O, generating O(2) and a proton gradient subsequently used for ATP formation. It consists of a core antenna complex that captures photons, and an electron transfer chain that converts photonic excitation into a charge separation. This subunit is found at the monomer-monomer interface.</text>
</comment>
<comment type="subunit">
    <text evidence="1">PSII is composed of 1 copy each of membrane proteins PsbA, PsbB, PsbC, PsbD, PsbE, PsbF, PsbH, PsbI, PsbJ, PsbK, PsbL, PsbM, PsbT, PsbX, PsbY, PsbZ, Psb30/Ycf12, at least 3 peripheral proteins of the oxygen-evolving complex and a large number of cofactors. It forms dimeric complexes.</text>
</comment>
<comment type="subcellular location">
    <subcellularLocation>
        <location evidence="1">Plastid</location>
        <location evidence="1">Chloroplast thylakoid membrane</location>
        <topology evidence="1">Single-pass membrane protein</topology>
    </subcellularLocation>
</comment>
<comment type="similarity">
    <text evidence="1">Belongs to the PsbM family.</text>
</comment>